<gene>
    <name evidence="1" type="primary">hisC</name>
    <name type="ordered locus">BF3188</name>
</gene>
<feature type="chain" id="PRO_0000153312" description="Histidinol-phosphate aminotransferase">
    <location>
        <begin position="1"/>
        <end position="345"/>
    </location>
</feature>
<feature type="modified residue" description="N6-(pyridoxal phosphate)lysine" evidence="1">
    <location>
        <position position="206"/>
    </location>
</feature>
<protein>
    <recommendedName>
        <fullName evidence="1">Histidinol-phosphate aminotransferase</fullName>
        <ecNumber evidence="1">2.6.1.9</ecNumber>
    </recommendedName>
    <alternativeName>
        <fullName evidence="1">Imidazole acetol-phosphate transaminase</fullName>
    </alternativeName>
</protein>
<evidence type="ECO:0000255" key="1">
    <source>
        <dbReference type="HAMAP-Rule" id="MF_01023"/>
    </source>
</evidence>
<reference key="1">
    <citation type="journal article" date="2004" name="Proc. Natl. Acad. Sci. U.S.A.">
        <title>Genomic analysis of Bacteroides fragilis reveals extensive DNA inversions regulating cell surface adaptation.</title>
        <authorList>
            <person name="Kuwahara T."/>
            <person name="Yamashita A."/>
            <person name="Hirakawa H."/>
            <person name="Nakayama H."/>
            <person name="Toh H."/>
            <person name="Okada N."/>
            <person name="Kuhara S."/>
            <person name="Hattori M."/>
            <person name="Hayashi T."/>
            <person name="Ohnishi Y."/>
        </authorList>
    </citation>
    <scope>NUCLEOTIDE SEQUENCE [LARGE SCALE GENOMIC DNA]</scope>
    <source>
        <strain>YCH46</strain>
    </source>
</reference>
<proteinExistence type="inferred from homology"/>
<sequence length="345" mass="39250">MKTLQELTRPNIWRLKPYSSARDEYSGAAASVFLDANENPYNLPHNRYPDPMQRDLKLELSKIKKVAPAHIFLGNGSDEAIDLVFRAFCEPGRDNVVAIDPTYGMYQVCADVNDVEYRKVLLHDDFQFSADELLAVADERTKMIFLCSPNNPTGNDLLRSEIIKVINDFEGLVILDEAYNDFSDEPSFLSELDKYPNLIILQTFSKAFGCAAIRLGMAFASEGIIGVLNKIKYPYNVNQLTQQQAIEMLHKYYEIERWVKTLKEERGYLEEAFVELPWVLQVFPSNANFFLARVTDAVKIYNYLVGEGIIVRNRNSISLCGNCLRVTVGTRAENAKLIGALKKYQ</sequence>
<keyword id="KW-0028">Amino-acid biosynthesis</keyword>
<keyword id="KW-0032">Aminotransferase</keyword>
<keyword id="KW-0368">Histidine biosynthesis</keyword>
<keyword id="KW-0663">Pyridoxal phosphate</keyword>
<keyword id="KW-0808">Transferase</keyword>
<dbReference type="EC" id="2.6.1.9" evidence="1"/>
<dbReference type="EMBL" id="AP006841">
    <property type="protein sequence ID" value="BAD49933.1"/>
    <property type="molecule type" value="Genomic_DNA"/>
</dbReference>
<dbReference type="RefSeq" id="WP_005789125.1">
    <property type="nucleotide sequence ID" value="NC_006347.1"/>
</dbReference>
<dbReference type="RefSeq" id="YP_100467.1">
    <property type="nucleotide sequence ID" value="NC_006347.1"/>
</dbReference>
<dbReference type="SMR" id="Q64RE8"/>
<dbReference type="STRING" id="295405.BF3188"/>
<dbReference type="KEGG" id="bfr:BF3188"/>
<dbReference type="PATRIC" id="fig|295405.11.peg.3055"/>
<dbReference type="HOGENOM" id="CLU_017584_3_1_10"/>
<dbReference type="OrthoDB" id="9813612at2"/>
<dbReference type="UniPathway" id="UPA00031">
    <property type="reaction ID" value="UER00012"/>
</dbReference>
<dbReference type="Proteomes" id="UP000002197">
    <property type="component" value="Chromosome"/>
</dbReference>
<dbReference type="GO" id="GO:0004400">
    <property type="term" value="F:histidinol-phosphate transaminase activity"/>
    <property type="evidence" value="ECO:0007669"/>
    <property type="project" value="UniProtKB-UniRule"/>
</dbReference>
<dbReference type="GO" id="GO:0030170">
    <property type="term" value="F:pyridoxal phosphate binding"/>
    <property type="evidence" value="ECO:0007669"/>
    <property type="project" value="InterPro"/>
</dbReference>
<dbReference type="GO" id="GO:0000105">
    <property type="term" value="P:L-histidine biosynthetic process"/>
    <property type="evidence" value="ECO:0007669"/>
    <property type="project" value="UniProtKB-UniRule"/>
</dbReference>
<dbReference type="CDD" id="cd00609">
    <property type="entry name" value="AAT_like"/>
    <property type="match status" value="1"/>
</dbReference>
<dbReference type="Gene3D" id="3.90.1150.10">
    <property type="entry name" value="Aspartate Aminotransferase, domain 1"/>
    <property type="match status" value="1"/>
</dbReference>
<dbReference type="Gene3D" id="3.40.640.10">
    <property type="entry name" value="Type I PLP-dependent aspartate aminotransferase-like (Major domain)"/>
    <property type="match status" value="1"/>
</dbReference>
<dbReference type="HAMAP" id="MF_01023">
    <property type="entry name" value="HisC_aminotrans_2"/>
    <property type="match status" value="1"/>
</dbReference>
<dbReference type="InterPro" id="IPR001917">
    <property type="entry name" value="Aminotrans_II_pyridoxalP_BS"/>
</dbReference>
<dbReference type="InterPro" id="IPR004839">
    <property type="entry name" value="Aminotransferase_I/II_large"/>
</dbReference>
<dbReference type="InterPro" id="IPR005861">
    <property type="entry name" value="HisP_aminotrans"/>
</dbReference>
<dbReference type="InterPro" id="IPR015424">
    <property type="entry name" value="PyrdxlP-dep_Trfase"/>
</dbReference>
<dbReference type="InterPro" id="IPR015421">
    <property type="entry name" value="PyrdxlP-dep_Trfase_major"/>
</dbReference>
<dbReference type="InterPro" id="IPR015422">
    <property type="entry name" value="PyrdxlP-dep_Trfase_small"/>
</dbReference>
<dbReference type="NCBIfam" id="TIGR01141">
    <property type="entry name" value="hisC"/>
    <property type="match status" value="1"/>
</dbReference>
<dbReference type="PANTHER" id="PTHR42885:SF2">
    <property type="entry name" value="HISTIDINOL-PHOSPHATE AMINOTRANSFERASE"/>
    <property type="match status" value="1"/>
</dbReference>
<dbReference type="PANTHER" id="PTHR42885">
    <property type="entry name" value="HISTIDINOL-PHOSPHATE AMINOTRANSFERASE-RELATED"/>
    <property type="match status" value="1"/>
</dbReference>
<dbReference type="Pfam" id="PF00155">
    <property type="entry name" value="Aminotran_1_2"/>
    <property type="match status" value="1"/>
</dbReference>
<dbReference type="SUPFAM" id="SSF53383">
    <property type="entry name" value="PLP-dependent transferases"/>
    <property type="match status" value="1"/>
</dbReference>
<dbReference type="PROSITE" id="PS00599">
    <property type="entry name" value="AA_TRANSFER_CLASS_2"/>
    <property type="match status" value="1"/>
</dbReference>
<comment type="catalytic activity">
    <reaction evidence="1">
        <text>L-histidinol phosphate + 2-oxoglutarate = 3-(imidazol-4-yl)-2-oxopropyl phosphate + L-glutamate</text>
        <dbReference type="Rhea" id="RHEA:23744"/>
        <dbReference type="ChEBI" id="CHEBI:16810"/>
        <dbReference type="ChEBI" id="CHEBI:29985"/>
        <dbReference type="ChEBI" id="CHEBI:57766"/>
        <dbReference type="ChEBI" id="CHEBI:57980"/>
        <dbReference type="EC" id="2.6.1.9"/>
    </reaction>
</comment>
<comment type="cofactor">
    <cofactor evidence="1">
        <name>pyridoxal 5'-phosphate</name>
        <dbReference type="ChEBI" id="CHEBI:597326"/>
    </cofactor>
</comment>
<comment type="pathway">
    <text evidence="1">Amino-acid biosynthesis; L-histidine biosynthesis; L-histidine from 5-phospho-alpha-D-ribose 1-diphosphate: step 7/9.</text>
</comment>
<comment type="subunit">
    <text evidence="1">Homodimer.</text>
</comment>
<comment type="similarity">
    <text evidence="1">Belongs to the class-II pyridoxal-phosphate-dependent aminotransferase family. Histidinol-phosphate aminotransferase subfamily.</text>
</comment>
<name>HIS8_BACFR</name>
<accession>Q64RE8</accession>
<organism>
    <name type="scientific">Bacteroides fragilis (strain YCH46)</name>
    <dbReference type="NCBI Taxonomy" id="295405"/>
    <lineage>
        <taxon>Bacteria</taxon>
        <taxon>Pseudomonadati</taxon>
        <taxon>Bacteroidota</taxon>
        <taxon>Bacteroidia</taxon>
        <taxon>Bacteroidales</taxon>
        <taxon>Bacteroidaceae</taxon>
        <taxon>Bacteroides</taxon>
    </lineage>
</organism>